<comment type="function">
    <text evidence="1">Participates in the translocation of lipoproteins from the inner membrane to the outer membrane. Only forms a complex with a lipoprotein if the residue after the N-terminal Cys is not an aspartate (The Asp acts as a targeting signal to indicate that the lipoprotein should stay in the inner membrane).</text>
</comment>
<comment type="subunit">
    <text evidence="1">Monomer.</text>
</comment>
<comment type="subcellular location">
    <subcellularLocation>
        <location evidence="1">Periplasm</location>
    </subcellularLocation>
</comment>
<comment type="similarity">
    <text evidence="1">Belongs to the LolA family.</text>
</comment>
<keyword id="KW-0143">Chaperone</keyword>
<keyword id="KW-0574">Periplasm</keyword>
<keyword id="KW-0653">Protein transport</keyword>
<keyword id="KW-1185">Reference proteome</keyword>
<keyword id="KW-0732">Signal</keyword>
<keyword id="KW-0813">Transport</keyword>
<accession>Q2KWE1</accession>
<sequence>MTRYVISRLSAIALLALAPALALADGAQDQLKAFVAKVQSATGDFTQSTVGPQGRTQPAQSGSFAFQRPGKFKWAVARPYEQLVISDGKQVYQYDPDLAQVTERKVDQAIGTSPAAILFGSGDLDKAFHVSPLPDRDGLQWLRAKPRNADAGFSQVDIAMNGDLPARVELLDAFGQTTRVDLSNIQANPKLPAAEFHFTAPSGVDVVKM</sequence>
<organism>
    <name type="scientific">Bordetella avium (strain 197N)</name>
    <dbReference type="NCBI Taxonomy" id="360910"/>
    <lineage>
        <taxon>Bacteria</taxon>
        <taxon>Pseudomonadati</taxon>
        <taxon>Pseudomonadota</taxon>
        <taxon>Betaproteobacteria</taxon>
        <taxon>Burkholderiales</taxon>
        <taxon>Alcaligenaceae</taxon>
        <taxon>Bordetella</taxon>
    </lineage>
</organism>
<feature type="signal peptide" evidence="1">
    <location>
        <begin position="1"/>
        <end position="24"/>
    </location>
</feature>
<feature type="chain" id="PRO_5000077433" description="Outer-membrane lipoprotein carrier protein">
    <location>
        <begin position="25"/>
        <end position="209"/>
    </location>
</feature>
<evidence type="ECO:0000255" key="1">
    <source>
        <dbReference type="HAMAP-Rule" id="MF_00240"/>
    </source>
</evidence>
<name>LOLA_BORA1</name>
<gene>
    <name evidence="1" type="primary">lolA</name>
    <name type="ordered locus">BAV2694</name>
</gene>
<protein>
    <recommendedName>
        <fullName evidence="1">Outer-membrane lipoprotein carrier protein</fullName>
    </recommendedName>
</protein>
<reference key="1">
    <citation type="journal article" date="2006" name="J. Bacteriol.">
        <title>Comparison of the genome sequence of the poultry pathogen Bordetella avium with those of B. bronchiseptica, B. pertussis, and B. parapertussis reveals extensive diversity in surface structures associated with host interaction.</title>
        <authorList>
            <person name="Sebaihia M."/>
            <person name="Preston A."/>
            <person name="Maskell D.J."/>
            <person name="Kuzmiak H."/>
            <person name="Connell T.D."/>
            <person name="King N.D."/>
            <person name="Orndorff P.E."/>
            <person name="Miyamoto D.M."/>
            <person name="Thomson N.R."/>
            <person name="Harris D."/>
            <person name="Goble A."/>
            <person name="Lord A."/>
            <person name="Murphy L."/>
            <person name="Quail M.A."/>
            <person name="Rutter S."/>
            <person name="Squares R."/>
            <person name="Squares S."/>
            <person name="Woodward J."/>
            <person name="Parkhill J."/>
            <person name="Temple L.M."/>
        </authorList>
    </citation>
    <scope>NUCLEOTIDE SEQUENCE [LARGE SCALE GENOMIC DNA]</scope>
    <source>
        <strain>197N</strain>
    </source>
</reference>
<proteinExistence type="inferred from homology"/>
<dbReference type="EMBL" id="AM167904">
    <property type="protein sequence ID" value="CAJ50305.1"/>
    <property type="molecule type" value="Genomic_DNA"/>
</dbReference>
<dbReference type="RefSeq" id="WP_012418336.1">
    <property type="nucleotide sequence ID" value="NC_010645.1"/>
</dbReference>
<dbReference type="SMR" id="Q2KWE1"/>
<dbReference type="STRING" id="360910.BAV2694"/>
<dbReference type="GeneID" id="92934123"/>
<dbReference type="KEGG" id="bav:BAV2694"/>
<dbReference type="eggNOG" id="COG2834">
    <property type="taxonomic scope" value="Bacteria"/>
</dbReference>
<dbReference type="HOGENOM" id="CLU_087560_0_1_4"/>
<dbReference type="OrthoDB" id="9787361at2"/>
<dbReference type="Proteomes" id="UP000001977">
    <property type="component" value="Chromosome"/>
</dbReference>
<dbReference type="GO" id="GO:0030288">
    <property type="term" value="C:outer membrane-bounded periplasmic space"/>
    <property type="evidence" value="ECO:0007669"/>
    <property type="project" value="TreeGrafter"/>
</dbReference>
<dbReference type="GO" id="GO:0044874">
    <property type="term" value="P:lipoprotein localization to outer membrane"/>
    <property type="evidence" value="ECO:0007669"/>
    <property type="project" value="UniProtKB-UniRule"/>
</dbReference>
<dbReference type="GO" id="GO:0042953">
    <property type="term" value="P:lipoprotein transport"/>
    <property type="evidence" value="ECO:0007669"/>
    <property type="project" value="InterPro"/>
</dbReference>
<dbReference type="CDD" id="cd16325">
    <property type="entry name" value="LolA"/>
    <property type="match status" value="1"/>
</dbReference>
<dbReference type="Gene3D" id="2.50.20.10">
    <property type="entry name" value="Lipoprotein localisation LolA/LolB/LppX"/>
    <property type="match status" value="1"/>
</dbReference>
<dbReference type="HAMAP" id="MF_00240">
    <property type="entry name" value="LolA"/>
    <property type="match status" value="1"/>
</dbReference>
<dbReference type="InterPro" id="IPR029046">
    <property type="entry name" value="LolA/LolB/LppX"/>
</dbReference>
<dbReference type="InterPro" id="IPR004564">
    <property type="entry name" value="OM_lipoprot_carrier_LolA-like"/>
</dbReference>
<dbReference type="InterPro" id="IPR018323">
    <property type="entry name" value="OM_lipoprot_carrier_LolA_Pbac"/>
</dbReference>
<dbReference type="NCBIfam" id="TIGR00547">
    <property type="entry name" value="lolA"/>
    <property type="match status" value="1"/>
</dbReference>
<dbReference type="NCBIfam" id="NF000661">
    <property type="entry name" value="PRK00031.1-3"/>
    <property type="match status" value="1"/>
</dbReference>
<dbReference type="PANTHER" id="PTHR35869">
    <property type="entry name" value="OUTER-MEMBRANE LIPOPROTEIN CARRIER PROTEIN"/>
    <property type="match status" value="1"/>
</dbReference>
<dbReference type="PANTHER" id="PTHR35869:SF1">
    <property type="entry name" value="OUTER-MEMBRANE LIPOPROTEIN CARRIER PROTEIN"/>
    <property type="match status" value="1"/>
</dbReference>
<dbReference type="Pfam" id="PF03548">
    <property type="entry name" value="LolA"/>
    <property type="match status" value="1"/>
</dbReference>
<dbReference type="SUPFAM" id="SSF89392">
    <property type="entry name" value="Prokaryotic lipoproteins and lipoprotein localization factors"/>
    <property type="match status" value="1"/>
</dbReference>